<keyword id="KW-0238">DNA-binding</keyword>
<keyword id="KW-0539">Nucleus</keyword>
<keyword id="KW-1185">Reference proteome</keyword>
<keyword id="KW-0804">Transcription</keyword>
<keyword id="KW-0805">Transcription regulation</keyword>
<gene>
    <name type="primary">EHF</name>
</gene>
<proteinExistence type="evidence at transcript level"/>
<feature type="chain" id="PRO_0000287132" description="ETS homologous factor">
    <location>
        <begin position="1"/>
        <end position="300"/>
    </location>
</feature>
<feature type="domain" description="PNT" evidence="3">
    <location>
        <begin position="29"/>
        <end position="115"/>
    </location>
</feature>
<feature type="DNA-binding region" description="ETS" evidence="2">
    <location>
        <begin position="207"/>
        <end position="289"/>
    </location>
</feature>
<feature type="region of interest" description="Disordered" evidence="4">
    <location>
        <begin position="179"/>
        <end position="204"/>
    </location>
</feature>
<feature type="compositionally biased region" description="Basic and acidic residues" evidence="4">
    <location>
        <begin position="185"/>
        <end position="195"/>
    </location>
</feature>
<name>EHF_BOVIN</name>
<comment type="function">
    <text evidence="1">Transcriptional activator that may play a role in regulating epithelial cell differentiation and proliferation. May act as a repressor for a specific subset of ETS/AP-1-responsive genes, and as a modulator of the nuclear response to mitogen-activated protein kinase signaling cascades. Binds to DNA sequences containing the consensus nucleotide core sequence GGAA. Involved in regulation of TNFRSF10B/DR5 expression through Ets-binding sequences on the TNFRSF10B/DR5 promoter (By similarity).</text>
</comment>
<comment type="subcellular location">
    <subcellularLocation>
        <location evidence="2">Nucleus</location>
    </subcellularLocation>
</comment>
<comment type="domain">
    <text evidence="1">The PNT domain acts as a transcriptional activator.</text>
</comment>
<comment type="similarity">
    <text evidence="5">Belongs to the ETS family.</text>
</comment>
<protein>
    <recommendedName>
        <fullName>ETS homologous factor</fullName>
    </recommendedName>
    <alternativeName>
        <fullName>ETS domain-containing transcription factor</fullName>
    </alternativeName>
</protein>
<organism>
    <name type="scientific">Bos taurus</name>
    <name type="common">Bovine</name>
    <dbReference type="NCBI Taxonomy" id="9913"/>
    <lineage>
        <taxon>Eukaryota</taxon>
        <taxon>Metazoa</taxon>
        <taxon>Chordata</taxon>
        <taxon>Craniata</taxon>
        <taxon>Vertebrata</taxon>
        <taxon>Euteleostomi</taxon>
        <taxon>Mammalia</taxon>
        <taxon>Eutheria</taxon>
        <taxon>Laurasiatheria</taxon>
        <taxon>Artiodactyla</taxon>
        <taxon>Ruminantia</taxon>
        <taxon>Pecora</taxon>
        <taxon>Bovidae</taxon>
        <taxon>Bovinae</taxon>
        <taxon>Bos</taxon>
    </lineage>
</organism>
<accession>Q32LN0</accession>
<dbReference type="EMBL" id="BC109503">
    <property type="protein sequence ID" value="AAI09504.1"/>
    <property type="molecule type" value="mRNA"/>
</dbReference>
<dbReference type="RefSeq" id="NP_001033125.1">
    <property type="nucleotide sequence ID" value="NM_001038036.3"/>
</dbReference>
<dbReference type="RefSeq" id="XP_005216430.1">
    <property type="nucleotide sequence ID" value="XM_005216373.5"/>
</dbReference>
<dbReference type="SMR" id="Q32LN0"/>
<dbReference type="FunCoup" id="Q32LN0">
    <property type="interactions" value="75"/>
</dbReference>
<dbReference type="STRING" id="9913.ENSBTAP00000068443"/>
<dbReference type="PaxDb" id="9913-ENSBTAP00000022792"/>
<dbReference type="GeneID" id="505422"/>
<dbReference type="KEGG" id="bta:505422"/>
<dbReference type="CTD" id="26298"/>
<dbReference type="VEuPathDB" id="HostDB:ENSBTAG00000017150"/>
<dbReference type="eggNOG" id="KOG3804">
    <property type="taxonomic scope" value="Eukaryota"/>
</dbReference>
<dbReference type="HOGENOM" id="CLU_048172_0_0_1"/>
<dbReference type="InParanoid" id="Q32LN0"/>
<dbReference type="OMA" id="MMDSKTF"/>
<dbReference type="OrthoDB" id="5961210at2759"/>
<dbReference type="TreeFam" id="TF318679"/>
<dbReference type="Proteomes" id="UP000009136">
    <property type="component" value="Chromosome 15"/>
</dbReference>
<dbReference type="Bgee" id="ENSBTAG00000017150">
    <property type="expression patterns" value="Expressed in prostate gland and 76 other cell types or tissues"/>
</dbReference>
<dbReference type="GO" id="GO:0005634">
    <property type="term" value="C:nucleus"/>
    <property type="evidence" value="ECO:0000318"/>
    <property type="project" value="GO_Central"/>
</dbReference>
<dbReference type="GO" id="GO:0000981">
    <property type="term" value="F:DNA-binding transcription factor activity, RNA polymerase II-specific"/>
    <property type="evidence" value="ECO:0000318"/>
    <property type="project" value="GO_Central"/>
</dbReference>
<dbReference type="GO" id="GO:0043565">
    <property type="term" value="F:sequence-specific DNA binding"/>
    <property type="evidence" value="ECO:0007669"/>
    <property type="project" value="InterPro"/>
</dbReference>
<dbReference type="GO" id="GO:0030154">
    <property type="term" value="P:cell differentiation"/>
    <property type="evidence" value="ECO:0000318"/>
    <property type="project" value="GO_Central"/>
</dbReference>
<dbReference type="GO" id="GO:0006357">
    <property type="term" value="P:regulation of transcription by RNA polymerase II"/>
    <property type="evidence" value="ECO:0000318"/>
    <property type="project" value="GO_Central"/>
</dbReference>
<dbReference type="FunFam" id="1.10.10.10:FF:000136">
    <property type="entry name" value="ETS homologous factor isoform X1"/>
    <property type="match status" value="1"/>
</dbReference>
<dbReference type="FunFam" id="1.10.150.50:FF:000026">
    <property type="entry name" value="ETS homologous factor isoform X1"/>
    <property type="match status" value="1"/>
</dbReference>
<dbReference type="Gene3D" id="1.10.150.50">
    <property type="entry name" value="Transcription Factor, Ets-1"/>
    <property type="match status" value="1"/>
</dbReference>
<dbReference type="Gene3D" id="1.10.10.10">
    <property type="entry name" value="Winged helix-like DNA-binding domain superfamily/Winged helix DNA-binding domain"/>
    <property type="match status" value="1"/>
</dbReference>
<dbReference type="InterPro" id="IPR000418">
    <property type="entry name" value="Ets_dom"/>
</dbReference>
<dbReference type="InterPro" id="IPR046328">
    <property type="entry name" value="ETS_fam"/>
</dbReference>
<dbReference type="InterPro" id="IPR003118">
    <property type="entry name" value="Pointed_dom"/>
</dbReference>
<dbReference type="InterPro" id="IPR013761">
    <property type="entry name" value="SAM/pointed_sf"/>
</dbReference>
<dbReference type="InterPro" id="IPR036388">
    <property type="entry name" value="WH-like_DNA-bd_sf"/>
</dbReference>
<dbReference type="InterPro" id="IPR036390">
    <property type="entry name" value="WH_DNA-bd_sf"/>
</dbReference>
<dbReference type="PANTHER" id="PTHR11849">
    <property type="entry name" value="ETS"/>
    <property type="match status" value="1"/>
</dbReference>
<dbReference type="PANTHER" id="PTHR11849:SF171">
    <property type="entry name" value="ETS HOMOLOGOUS FACTOR"/>
    <property type="match status" value="1"/>
</dbReference>
<dbReference type="Pfam" id="PF00178">
    <property type="entry name" value="Ets"/>
    <property type="match status" value="1"/>
</dbReference>
<dbReference type="Pfam" id="PF02198">
    <property type="entry name" value="SAM_PNT"/>
    <property type="match status" value="1"/>
</dbReference>
<dbReference type="PRINTS" id="PR00454">
    <property type="entry name" value="ETSDOMAIN"/>
</dbReference>
<dbReference type="SMART" id="SM00413">
    <property type="entry name" value="ETS"/>
    <property type="match status" value="1"/>
</dbReference>
<dbReference type="SMART" id="SM00251">
    <property type="entry name" value="SAM_PNT"/>
    <property type="match status" value="1"/>
</dbReference>
<dbReference type="SUPFAM" id="SSF47769">
    <property type="entry name" value="SAM/Pointed domain"/>
    <property type="match status" value="1"/>
</dbReference>
<dbReference type="SUPFAM" id="SSF46785">
    <property type="entry name" value="Winged helix' DNA-binding domain"/>
    <property type="match status" value="1"/>
</dbReference>
<dbReference type="PROSITE" id="PS50061">
    <property type="entry name" value="ETS_DOMAIN_3"/>
    <property type="match status" value="1"/>
</dbReference>
<dbReference type="PROSITE" id="PS51433">
    <property type="entry name" value="PNT"/>
    <property type="match status" value="1"/>
</dbReference>
<evidence type="ECO:0000250" key="1"/>
<evidence type="ECO:0000255" key="2">
    <source>
        <dbReference type="PROSITE-ProRule" id="PRU00237"/>
    </source>
</evidence>
<evidence type="ECO:0000255" key="3">
    <source>
        <dbReference type="PROSITE-ProRule" id="PRU00762"/>
    </source>
</evidence>
<evidence type="ECO:0000256" key="4">
    <source>
        <dbReference type="SAM" id="MobiDB-lite"/>
    </source>
</evidence>
<evidence type="ECO:0000305" key="5"/>
<sequence length="300" mass="35004">MILEGSGVMNLNPSNNLLHQQPTWTDSYSTCNVSSGFFGGQWHEIHPQYWTKYQVWEWLQHLLDTNQLDASCIPFQEFDVNGEHLCSMSLQEFTRAAGTAGQLLYSNLQHLKWNGQCSSDLFQSTHNVIVKTEQTDPSIMNTWKEENYLYDTNYGSTVDLLDSKTFCRAQISMTTTGHLPIAESPDTKKEQDHPTKPHTKKHNPRGTHLWEFIRDILLNPDKNPGLIKWEDRSEGIFRFLKSEAVAQLWGKKKNNSSMTYEKLSRAMRYYYKREILERVDGRRLVYKFGKNARGWRENEN</sequence>
<reference key="1">
    <citation type="submission" date="2005-11" db="EMBL/GenBank/DDBJ databases">
        <authorList>
            <consortium name="NIH - Mammalian Gene Collection (MGC) project"/>
        </authorList>
    </citation>
    <scope>NUCLEOTIDE SEQUENCE [LARGE SCALE MRNA]</scope>
    <source>
        <strain>Crossbred X Angus</strain>
        <tissue>Liver</tissue>
    </source>
</reference>